<proteinExistence type="inferred from homology"/>
<accession>Q0HW68</accession>
<dbReference type="EMBL" id="CP000444">
    <property type="protein sequence ID" value="ABI42637.1"/>
    <property type="molecule type" value="Genomic_DNA"/>
</dbReference>
<dbReference type="SMR" id="Q0HW68"/>
<dbReference type="KEGG" id="shm:Shewmr7_1642"/>
<dbReference type="HOGENOM" id="CLU_041110_0_0_6"/>
<dbReference type="GO" id="GO:0005886">
    <property type="term" value="C:plasma membrane"/>
    <property type="evidence" value="ECO:0007669"/>
    <property type="project" value="UniProtKB-SubCell"/>
</dbReference>
<dbReference type="GO" id="GO:0015385">
    <property type="term" value="F:sodium:proton antiporter activity"/>
    <property type="evidence" value="ECO:0007669"/>
    <property type="project" value="InterPro"/>
</dbReference>
<dbReference type="HAMAP" id="MF_01599">
    <property type="entry name" value="NhaB"/>
    <property type="match status" value="1"/>
</dbReference>
<dbReference type="InterPro" id="IPR004671">
    <property type="entry name" value="Na+/H+_antiporter_NhaB"/>
</dbReference>
<dbReference type="NCBIfam" id="TIGR00774">
    <property type="entry name" value="NhaB"/>
    <property type="match status" value="1"/>
</dbReference>
<dbReference type="NCBIfam" id="NF007093">
    <property type="entry name" value="PRK09547.1"/>
    <property type="match status" value="1"/>
</dbReference>
<dbReference type="PANTHER" id="PTHR43302:SF1">
    <property type="entry name" value="NA(+)_H(+) ANTIPORTER NHAB"/>
    <property type="match status" value="1"/>
</dbReference>
<dbReference type="PANTHER" id="PTHR43302">
    <property type="entry name" value="TRANSPORTER ARSB-RELATED"/>
    <property type="match status" value="1"/>
</dbReference>
<dbReference type="Pfam" id="PF06450">
    <property type="entry name" value="NhaB"/>
    <property type="match status" value="1"/>
</dbReference>
<sequence length="533" mass="58226">MPMTMSQAFIGNFLGNSPKWYKIAILSFLIINPILFFYVSPFVAGWVLVLEFIFTLAMALKCYPLQPGGLLAIQAVAIGMTSASQVLHEIEANLEVLLLLVFMVAGIYFMKQLLLFAFTKMITKVRSKILVSLMFCLASAFLSAFLDALTVIAVIITVAVGFYSIYHKVASGKDFSADHDHTSEGKNEDGENQLNEEELESFRGFLRNLLMHAGVGTALGGVCTMVGEPQNLIIAAQANWQFGEFAIRMSPVTVPVLFAGILTCFLVEKLRWFGYGAQLPEAVHKILCDYAAYEDARRTNKDKMKLVIQAFVGVWLIAGLALHLASVGLIGLSVIILTTAFNGITDEHALGKAFEEALPFTALLAVFFAVVAVIIDQQLFGPVIQWALNHEGNTQLVIFYIANGLLSMVSDNVFVGTVYINEVKAALINGQITRDQFDLLAVAINTGTNLPSVATPNGQAAFLFLLTSALAPLIRLSYGRMVWMALPYTIVLSIVGVMAIESGFLEQMTQYFYDSHAIIHHSVKEALAPAAAH</sequence>
<name>NHAB_SHESR</name>
<feature type="chain" id="PRO_0000333137" description="Na(+)/H(+) antiporter NhaB">
    <location>
        <begin position="1"/>
        <end position="533"/>
    </location>
</feature>
<feature type="transmembrane region" description="Helical" evidence="1">
    <location>
        <begin position="10"/>
        <end position="30"/>
    </location>
</feature>
<feature type="transmembrane region" description="Helical" evidence="1">
    <location>
        <begin position="67"/>
        <end position="87"/>
    </location>
</feature>
<feature type="transmembrane region" description="Helical" evidence="1">
    <location>
        <begin position="96"/>
        <end position="116"/>
    </location>
</feature>
<feature type="transmembrane region" description="Helical" evidence="1">
    <location>
        <begin position="131"/>
        <end position="165"/>
    </location>
</feature>
<feature type="transmembrane region" description="Helical" evidence="1">
    <location>
        <begin position="209"/>
        <end position="229"/>
    </location>
</feature>
<feature type="transmembrane region" description="Helical" evidence="1">
    <location>
        <begin position="247"/>
        <end position="267"/>
    </location>
</feature>
<feature type="transmembrane region" description="Helical" evidence="1">
    <location>
        <begin position="310"/>
        <end position="330"/>
    </location>
</feature>
<feature type="transmembrane region" description="Helical" evidence="1">
    <location>
        <begin position="355"/>
        <end position="375"/>
    </location>
</feature>
<feature type="transmembrane region" description="Helical" evidence="1">
    <location>
        <begin position="396"/>
        <end position="416"/>
    </location>
</feature>
<feature type="transmembrane region" description="Helical" evidence="1">
    <location>
        <begin position="454"/>
        <end position="474"/>
    </location>
</feature>
<feature type="transmembrane region" description="Helical" evidence="1">
    <location>
        <begin position="481"/>
        <end position="501"/>
    </location>
</feature>
<keyword id="KW-0050">Antiport</keyword>
<keyword id="KW-0997">Cell inner membrane</keyword>
<keyword id="KW-1003">Cell membrane</keyword>
<keyword id="KW-0406">Ion transport</keyword>
<keyword id="KW-0472">Membrane</keyword>
<keyword id="KW-0915">Sodium</keyword>
<keyword id="KW-0739">Sodium transport</keyword>
<keyword id="KW-0812">Transmembrane</keyword>
<keyword id="KW-1133">Transmembrane helix</keyword>
<keyword id="KW-0813">Transport</keyword>
<protein>
    <recommendedName>
        <fullName evidence="1">Na(+)/H(+) antiporter NhaB</fullName>
    </recommendedName>
    <alternativeName>
        <fullName evidence="1">Sodium/proton antiporter NhaB</fullName>
    </alternativeName>
</protein>
<gene>
    <name evidence="1" type="primary">nhaB</name>
    <name type="ordered locus">Shewmr7_1642</name>
</gene>
<reference key="1">
    <citation type="submission" date="2006-08" db="EMBL/GenBank/DDBJ databases">
        <title>Complete sequence of chromosome 1 of Shewanella sp. MR-7.</title>
        <authorList>
            <person name="Copeland A."/>
            <person name="Lucas S."/>
            <person name="Lapidus A."/>
            <person name="Barry K."/>
            <person name="Detter J.C."/>
            <person name="Glavina del Rio T."/>
            <person name="Hammon N."/>
            <person name="Israni S."/>
            <person name="Dalin E."/>
            <person name="Tice H."/>
            <person name="Pitluck S."/>
            <person name="Kiss H."/>
            <person name="Brettin T."/>
            <person name="Bruce D."/>
            <person name="Han C."/>
            <person name="Tapia R."/>
            <person name="Gilna P."/>
            <person name="Schmutz J."/>
            <person name="Larimer F."/>
            <person name="Land M."/>
            <person name="Hauser L."/>
            <person name="Kyrpides N."/>
            <person name="Mikhailova N."/>
            <person name="Nealson K."/>
            <person name="Konstantinidis K."/>
            <person name="Klappenbach J."/>
            <person name="Tiedje J."/>
            <person name="Richardson P."/>
        </authorList>
    </citation>
    <scope>NUCLEOTIDE SEQUENCE [LARGE SCALE GENOMIC DNA]</scope>
    <source>
        <strain>MR-7</strain>
    </source>
</reference>
<evidence type="ECO:0000255" key="1">
    <source>
        <dbReference type="HAMAP-Rule" id="MF_01599"/>
    </source>
</evidence>
<comment type="function">
    <text evidence="1">Na(+)/H(+) antiporter that extrudes sodium in exchange for external protons.</text>
</comment>
<comment type="catalytic activity">
    <reaction evidence="1">
        <text>2 Na(+)(in) + 3 H(+)(out) = 2 Na(+)(out) + 3 H(+)(in)</text>
        <dbReference type="Rhea" id="RHEA:29247"/>
        <dbReference type="ChEBI" id="CHEBI:15378"/>
        <dbReference type="ChEBI" id="CHEBI:29101"/>
    </reaction>
    <physiologicalReaction direction="left-to-right" evidence="1">
        <dbReference type="Rhea" id="RHEA:29248"/>
    </physiologicalReaction>
</comment>
<comment type="subcellular location">
    <subcellularLocation>
        <location evidence="1">Cell inner membrane</location>
        <topology evidence="1">Multi-pass membrane protein</topology>
    </subcellularLocation>
</comment>
<comment type="similarity">
    <text evidence="1">Belongs to the NhaB Na(+)/H(+) (TC 2.A.34) antiporter family.</text>
</comment>
<organism>
    <name type="scientific">Shewanella sp. (strain MR-7)</name>
    <dbReference type="NCBI Taxonomy" id="60481"/>
    <lineage>
        <taxon>Bacteria</taxon>
        <taxon>Pseudomonadati</taxon>
        <taxon>Pseudomonadota</taxon>
        <taxon>Gammaproteobacteria</taxon>
        <taxon>Alteromonadales</taxon>
        <taxon>Shewanellaceae</taxon>
        <taxon>Shewanella</taxon>
    </lineage>
</organism>